<keyword id="KW-0997">Cell inner membrane</keyword>
<keyword id="KW-1003">Cell membrane</keyword>
<keyword id="KW-0472">Membrane</keyword>
<keyword id="KW-0762">Sugar transport</keyword>
<keyword id="KW-0812">Transmembrane</keyword>
<keyword id="KW-1133">Transmembrane helix</keyword>
<keyword id="KW-0813">Transport</keyword>
<evidence type="ECO:0000255" key="1">
    <source>
        <dbReference type="HAMAP-Rule" id="MF_00517"/>
    </source>
</evidence>
<organism>
    <name type="scientific">Helicobacter pylori (strain HPAG1)</name>
    <dbReference type="NCBI Taxonomy" id="357544"/>
    <lineage>
        <taxon>Bacteria</taxon>
        <taxon>Pseudomonadati</taxon>
        <taxon>Campylobacterota</taxon>
        <taxon>Epsilonproteobacteria</taxon>
        <taxon>Campylobacterales</taxon>
        <taxon>Helicobacteraceae</taxon>
        <taxon>Helicobacter</taxon>
    </lineage>
</organism>
<comment type="function">
    <text evidence="1">Involved in the efflux of sugars. The physiological role may be the reduction of the intracellular concentration of toxic sugars or sugar metabolites.</text>
</comment>
<comment type="subcellular location">
    <subcellularLocation>
        <location evidence="1">Cell inner membrane</location>
        <topology evidence="1">Multi-pass membrane protein</topology>
    </subcellularLocation>
</comment>
<comment type="similarity">
    <text evidence="1">Belongs to the major facilitator superfamily. SotB (TC 2.A.1.2) family.</text>
</comment>
<name>SOTB_HELPH</name>
<sequence length="391" mass="43272">MMITKQSYQKFALMRVFVFSLSAFIFNTTEFVPVALLSDIAKSFEMESATVGLMITAYAWVVSLGSLPLMLLSAKIERKRLLLFLFALFILSHILSALAWNFWVLLLSRMGIAFTHSIFWSITASLVIRVAPRNKKQQALGLLALGSSLAMILGLPLGRIIGQMLDWRSTFGVIGGVATLIALLMWKLLPHLPSRNAGTLASVPILMKRPLLMGIYLLVIMVISGHFTTYSYIEPFIIQISQFSPDITTLMLFVFGLAGVAGSFLFSRLYAKNSRKFIAFAMVLVICPQLLLFVFKNLEWVIFLQIFLWGIGITSLTIALQMRVLQLAPDATDVASAIFSGSYNVGIGSGALFGSIVIHQLGLEYIGFVGGALGLLALFWLRFITIKFKKT</sequence>
<protein>
    <recommendedName>
        <fullName evidence="1">Probable sugar efflux transporter</fullName>
    </recommendedName>
</protein>
<dbReference type="EMBL" id="CP000241">
    <property type="protein sequence ID" value="ABF85192.1"/>
    <property type="molecule type" value="Genomic_DNA"/>
</dbReference>
<dbReference type="RefSeq" id="WP_000973598.1">
    <property type="nucleotide sequence ID" value="NC_008086.1"/>
</dbReference>
<dbReference type="SMR" id="Q1CS80"/>
<dbReference type="KEGG" id="hpa:HPAG1_1125"/>
<dbReference type="HOGENOM" id="CLU_001265_61_1_7"/>
<dbReference type="GO" id="GO:0005886">
    <property type="term" value="C:plasma membrane"/>
    <property type="evidence" value="ECO:0007669"/>
    <property type="project" value="UniProtKB-SubCell"/>
</dbReference>
<dbReference type="GO" id="GO:0015144">
    <property type="term" value="F:carbohydrate transmembrane transporter activity"/>
    <property type="evidence" value="ECO:0007669"/>
    <property type="project" value="UniProtKB-UniRule"/>
</dbReference>
<dbReference type="CDD" id="cd17324">
    <property type="entry name" value="MFS_NepI_like"/>
    <property type="match status" value="1"/>
</dbReference>
<dbReference type="Gene3D" id="1.20.1250.20">
    <property type="entry name" value="MFS general substrate transporter like domains"/>
    <property type="match status" value="1"/>
</dbReference>
<dbReference type="HAMAP" id="MF_00517">
    <property type="entry name" value="MFS_SotB"/>
    <property type="match status" value="1"/>
</dbReference>
<dbReference type="InterPro" id="IPR011701">
    <property type="entry name" value="MFS"/>
</dbReference>
<dbReference type="InterPro" id="IPR020846">
    <property type="entry name" value="MFS_dom"/>
</dbReference>
<dbReference type="InterPro" id="IPR050189">
    <property type="entry name" value="MFS_Efflux_Transporters"/>
</dbReference>
<dbReference type="InterPro" id="IPR036259">
    <property type="entry name" value="MFS_trans_sf"/>
</dbReference>
<dbReference type="InterPro" id="IPR023495">
    <property type="entry name" value="Sugar_effux_transptr_put"/>
</dbReference>
<dbReference type="NCBIfam" id="NF002921">
    <property type="entry name" value="PRK03545.1"/>
    <property type="match status" value="1"/>
</dbReference>
<dbReference type="PANTHER" id="PTHR43124">
    <property type="entry name" value="PURINE EFFLUX PUMP PBUE"/>
    <property type="match status" value="1"/>
</dbReference>
<dbReference type="PANTHER" id="PTHR43124:SF4">
    <property type="entry name" value="SUGAR EFFLUX TRANSPORTER"/>
    <property type="match status" value="1"/>
</dbReference>
<dbReference type="Pfam" id="PF07690">
    <property type="entry name" value="MFS_1"/>
    <property type="match status" value="1"/>
</dbReference>
<dbReference type="SUPFAM" id="SSF103473">
    <property type="entry name" value="MFS general substrate transporter"/>
    <property type="match status" value="1"/>
</dbReference>
<dbReference type="PROSITE" id="PS50850">
    <property type="entry name" value="MFS"/>
    <property type="match status" value="1"/>
</dbReference>
<proteinExistence type="inferred from homology"/>
<accession>Q1CS80</accession>
<gene>
    <name evidence="1" type="primary">sotB</name>
    <name type="ordered locus">HPAG1_1125</name>
</gene>
<feature type="chain" id="PRO_0000259251" description="Probable sugar efflux transporter">
    <location>
        <begin position="1"/>
        <end position="391"/>
    </location>
</feature>
<feature type="transmembrane region" description="Helical" evidence="1">
    <location>
        <begin position="16"/>
        <end position="36"/>
    </location>
</feature>
<feature type="transmembrane region" description="Helical" evidence="1">
    <location>
        <begin position="51"/>
        <end position="71"/>
    </location>
</feature>
<feature type="transmembrane region" description="Helical" evidence="1">
    <location>
        <begin position="82"/>
        <end position="102"/>
    </location>
</feature>
<feature type="transmembrane region" description="Helical" evidence="1">
    <location>
        <begin position="110"/>
        <end position="130"/>
    </location>
</feature>
<feature type="transmembrane region" description="Helical" evidence="1">
    <location>
        <begin position="138"/>
        <end position="158"/>
    </location>
</feature>
<feature type="transmembrane region" description="Helical" evidence="1">
    <location>
        <begin position="170"/>
        <end position="190"/>
    </location>
</feature>
<feature type="transmembrane region" description="Helical" evidence="1">
    <location>
        <begin position="210"/>
        <end position="230"/>
    </location>
</feature>
<feature type="transmembrane region" description="Helical" evidence="1">
    <location>
        <begin position="247"/>
        <end position="267"/>
    </location>
</feature>
<feature type="transmembrane region" description="Helical" evidence="1">
    <location>
        <begin position="277"/>
        <end position="297"/>
    </location>
</feature>
<feature type="transmembrane region" description="Helical" evidence="1">
    <location>
        <begin position="300"/>
        <end position="320"/>
    </location>
</feature>
<feature type="transmembrane region" description="Helical" evidence="1">
    <location>
        <begin position="338"/>
        <end position="358"/>
    </location>
</feature>
<feature type="transmembrane region" description="Helical" evidence="1">
    <location>
        <begin position="361"/>
        <end position="381"/>
    </location>
</feature>
<reference key="1">
    <citation type="journal article" date="2006" name="Proc. Natl. Acad. Sci. U.S.A.">
        <title>The complete genome sequence of a chronic atrophic gastritis Helicobacter pylori strain: evolution during disease progression.</title>
        <authorList>
            <person name="Oh J.D."/>
            <person name="Kling-Baeckhed H."/>
            <person name="Giannakis M."/>
            <person name="Xu J."/>
            <person name="Fulton R.S."/>
            <person name="Fulton L.A."/>
            <person name="Cordum H.S."/>
            <person name="Wang C."/>
            <person name="Elliott G."/>
            <person name="Edwards J."/>
            <person name="Mardis E.R."/>
            <person name="Engstrand L.G."/>
            <person name="Gordon J.I."/>
        </authorList>
    </citation>
    <scope>NUCLEOTIDE SEQUENCE [LARGE SCALE GENOMIC DNA]</scope>
    <source>
        <strain>HPAG1</strain>
    </source>
</reference>